<proteinExistence type="predicted"/>
<keyword id="KW-0040">ANK repeat</keyword>
<keyword id="KW-1185">Reference proteome</keyword>
<keyword id="KW-0677">Repeat</keyword>
<organism>
    <name type="scientific">Acanthamoeba polyphaga mimivirus</name>
    <name type="common">APMV</name>
    <dbReference type="NCBI Taxonomy" id="212035"/>
    <lineage>
        <taxon>Viruses</taxon>
        <taxon>Varidnaviria</taxon>
        <taxon>Bamfordvirae</taxon>
        <taxon>Nucleocytoviricota</taxon>
        <taxon>Megaviricetes</taxon>
        <taxon>Imitervirales</taxon>
        <taxon>Mimiviridae</taxon>
        <taxon>Megamimivirinae</taxon>
        <taxon>Mimivirus</taxon>
        <taxon>Mimivirus bradfordmassiliense</taxon>
    </lineage>
</organism>
<gene>
    <name type="ordered locus">MIMI_L25</name>
</gene>
<sequence length="326" mass="36817">MISIGVYIHTRSEYPLRWASTEGHVEVVIYLVENGADLNVLKLFYVDKYLQVVKYLIENGSNIHVDDEFTLIYASKGGYLELVNLLIKNGADIHVNDDAPLKWASKNGHLEVVKYLVENGADIHAYNELVVYASEGGHLQIVKYLVKKGADIHAEDDEALKWASRSGHLEVVKYLVEKGANFRAENDYALRWACEKGHLEIVKYLVEKGADIHAEDEYALRWASRSGHLEVVKYLVENGADIHACNDYGLRKASRNRHLNVVKYLMENGANIHAKDDYALRLASVNGHFKLVKFLVENGANIHAKNNEALIRPLGEGHIKIVTYLE</sequence>
<name>YL025_MIMIV</name>
<protein>
    <recommendedName>
        <fullName>Putative ankyrin repeat protein L25</fullName>
    </recommendedName>
</protein>
<reference key="1">
    <citation type="journal article" date="2004" name="Science">
        <title>The 1.2-megabase genome sequence of Mimivirus.</title>
        <authorList>
            <person name="Raoult D."/>
            <person name="Audic S."/>
            <person name="Robert C."/>
            <person name="Abergel C."/>
            <person name="Renesto P."/>
            <person name="Ogata H."/>
            <person name="La Scola B."/>
            <person name="Susan M."/>
            <person name="Claverie J.-M."/>
        </authorList>
    </citation>
    <scope>NUCLEOTIDE SEQUENCE [LARGE SCALE GENOMIC DNA]</scope>
    <source>
        <strain>Rowbotham-Bradford</strain>
    </source>
</reference>
<accession>Q5UPA0</accession>
<organismHost>
    <name type="scientific">Acanthamoeba polyphaga</name>
    <name type="common">Amoeba</name>
    <dbReference type="NCBI Taxonomy" id="5757"/>
</organismHost>
<dbReference type="EMBL" id="AY653733">
    <property type="protein sequence ID" value="AAV50300.1"/>
    <property type="molecule type" value="Genomic_DNA"/>
</dbReference>
<dbReference type="SMR" id="Q5UPA0"/>
<dbReference type="KEGG" id="vg:9924603"/>
<dbReference type="OrthoDB" id="38654at10239"/>
<dbReference type="Proteomes" id="UP000001134">
    <property type="component" value="Genome"/>
</dbReference>
<dbReference type="Gene3D" id="1.25.40.20">
    <property type="entry name" value="Ankyrin repeat-containing domain"/>
    <property type="match status" value="5"/>
</dbReference>
<dbReference type="InterPro" id="IPR002110">
    <property type="entry name" value="Ankyrin_rpt"/>
</dbReference>
<dbReference type="InterPro" id="IPR036770">
    <property type="entry name" value="Ankyrin_rpt-contain_sf"/>
</dbReference>
<dbReference type="PANTHER" id="PTHR24188">
    <property type="entry name" value="ANKYRIN REPEAT PROTEIN"/>
    <property type="match status" value="1"/>
</dbReference>
<dbReference type="PANTHER" id="PTHR24188:SF29">
    <property type="entry name" value="GH09064P"/>
    <property type="match status" value="1"/>
</dbReference>
<dbReference type="Pfam" id="PF00023">
    <property type="entry name" value="Ank"/>
    <property type="match status" value="1"/>
</dbReference>
<dbReference type="Pfam" id="PF12796">
    <property type="entry name" value="Ank_2"/>
    <property type="match status" value="4"/>
</dbReference>
<dbReference type="SMART" id="SM00248">
    <property type="entry name" value="ANK"/>
    <property type="match status" value="9"/>
</dbReference>
<dbReference type="SUPFAM" id="SSF48403">
    <property type="entry name" value="Ankyrin repeat"/>
    <property type="match status" value="1"/>
</dbReference>
<dbReference type="PROSITE" id="PS50297">
    <property type="entry name" value="ANK_REP_REGION"/>
    <property type="match status" value="1"/>
</dbReference>
<dbReference type="PROSITE" id="PS50088">
    <property type="entry name" value="ANK_REPEAT"/>
    <property type="match status" value="9"/>
</dbReference>
<feature type="chain" id="PRO_0000067136" description="Putative ankyrin repeat protein L25">
    <location>
        <begin position="1"/>
        <end position="326"/>
    </location>
</feature>
<feature type="repeat" description="ANK 1">
    <location>
        <begin position="11"/>
        <end position="40"/>
    </location>
</feature>
<feature type="repeat" description="ANK 2">
    <location>
        <begin position="42"/>
        <end position="65"/>
    </location>
</feature>
<feature type="repeat" description="ANK 3">
    <location>
        <begin position="66"/>
        <end position="95"/>
    </location>
</feature>
<feature type="repeat" description="ANK 4">
    <location>
        <begin position="96"/>
        <end position="125"/>
    </location>
</feature>
<feature type="repeat" description="ANK 5">
    <location>
        <begin position="127"/>
        <end position="154"/>
    </location>
</feature>
<feature type="repeat" description="ANK 6">
    <location>
        <begin position="155"/>
        <end position="184"/>
    </location>
</feature>
<feature type="repeat" description="ANK 7">
    <location>
        <begin position="185"/>
        <end position="214"/>
    </location>
</feature>
<feature type="repeat" description="ANK 8">
    <location>
        <begin position="216"/>
        <end position="244"/>
    </location>
</feature>
<feature type="repeat" description="ANK 9">
    <location>
        <begin position="246"/>
        <end position="274"/>
    </location>
</feature>
<feature type="repeat" description="ANK 10">
    <location>
        <begin position="275"/>
        <end position="304"/>
    </location>
</feature>